<name>SYC_FRATW</name>
<accession>A4IWF2</accession>
<proteinExistence type="inferred from homology"/>
<dbReference type="EC" id="6.1.1.16" evidence="1"/>
<dbReference type="EMBL" id="CP000608">
    <property type="protein sequence ID" value="ABO46254.1"/>
    <property type="molecule type" value="Genomic_DNA"/>
</dbReference>
<dbReference type="RefSeq" id="WP_003017134.1">
    <property type="nucleotide sequence ID" value="NC_009257.1"/>
</dbReference>
<dbReference type="SMR" id="A4IWF2"/>
<dbReference type="GeneID" id="75264190"/>
<dbReference type="KEGG" id="ftw:FTW_0301"/>
<dbReference type="HOGENOM" id="CLU_013528_0_1_6"/>
<dbReference type="GO" id="GO:0005829">
    <property type="term" value="C:cytosol"/>
    <property type="evidence" value="ECO:0007669"/>
    <property type="project" value="TreeGrafter"/>
</dbReference>
<dbReference type="GO" id="GO:0005524">
    <property type="term" value="F:ATP binding"/>
    <property type="evidence" value="ECO:0007669"/>
    <property type="project" value="UniProtKB-UniRule"/>
</dbReference>
<dbReference type="GO" id="GO:0004817">
    <property type="term" value="F:cysteine-tRNA ligase activity"/>
    <property type="evidence" value="ECO:0007669"/>
    <property type="project" value="UniProtKB-UniRule"/>
</dbReference>
<dbReference type="GO" id="GO:0008270">
    <property type="term" value="F:zinc ion binding"/>
    <property type="evidence" value="ECO:0007669"/>
    <property type="project" value="UniProtKB-UniRule"/>
</dbReference>
<dbReference type="GO" id="GO:0006423">
    <property type="term" value="P:cysteinyl-tRNA aminoacylation"/>
    <property type="evidence" value="ECO:0007669"/>
    <property type="project" value="UniProtKB-UniRule"/>
</dbReference>
<dbReference type="CDD" id="cd07963">
    <property type="entry name" value="Anticodon_Ia_Cys"/>
    <property type="match status" value="1"/>
</dbReference>
<dbReference type="CDD" id="cd00672">
    <property type="entry name" value="CysRS_core"/>
    <property type="match status" value="1"/>
</dbReference>
<dbReference type="FunFam" id="3.40.50.620:FF:000009">
    <property type="entry name" value="Cysteine--tRNA ligase"/>
    <property type="match status" value="1"/>
</dbReference>
<dbReference type="Gene3D" id="1.20.120.1910">
    <property type="entry name" value="Cysteine-tRNA ligase, C-terminal anti-codon recognition domain"/>
    <property type="match status" value="1"/>
</dbReference>
<dbReference type="Gene3D" id="3.40.50.620">
    <property type="entry name" value="HUPs"/>
    <property type="match status" value="1"/>
</dbReference>
<dbReference type="HAMAP" id="MF_00041">
    <property type="entry name" value="Cys_tRNA_synth"/>
    <property type="match status" value="1"/>
</dbReference>
<dbReference type="InterPro" id="IPR015803">
    <property type="entry name" value="Cys-tRNA-ligase"/>
</dbReference>
<dbReference type="InterPro" id="IPR015273">
    <property type="entry name" value="Cys-tRNA-synt_Ia_DALR"/>
</dbReference>
<dbReference type="InterPro" id="IPR024909">
    <property type="entry name" value="Cys-tRNA/MSH_ligase"/>
</dbReference>
<dbReference type="InterPro" id="IPR056411">
    <property type="entry name" value="CysS_C"/>
</dbReference>
<dbReference type="InterPro" id="IPR014729">
    <property type="entry name" value="Rossmann-like_a/b/a_fold"/>
</dbReference>
<dbReference type="InterPro" id="IPR032678">
    <property type="entry name" value="tRNA-synt_1_cat_dom"/>
</dbReference>
<dbReference type="InterPro" id="IPR009080">
    <property type="entry name" value="tRNAsynth_Ia_anticodon-bd"/>
</dbReference>
<dbReference type="NCBIfam" id="TIGR00435">
    <property type="entry name" value="cysS"/>
    <property type="match status" value="1"/>
</dbReference>
<dbReference type="PANTHER" id="PTHR10890:SF3">
    <property type="entry name" value="CYSTEINE--TRNA LIGASE, CYTOPLASMIC"/>
    <property type="match status" value="1"/>
</dbReference>
<dbReference type="PANTHER" id="PTHR10890">
    <property type="entry name" value="CYSTEINYL-TRNA SYNTHETASE"/>
    <property type="match status" value="1"/>
</dbReference>
<dbReference type="Pfam" id="PF23493">
    <property type="entry name" value="CysS_C"/>
    <property type="match status" value="1"/>
</dbReference>
<dbReference type="Pfam" id="PF09190">
    <property type="entry name" value="DALR_2"/>
    <property type="match status" value="1"/>
</dbReference>
<dbReference type="Pfam" id="PF01406">
    <property type="entry name" value="tRNA-synt_1e"/>
    <property type="match status" value="1"/>
</dbReference>
<dbReference type="PRINTS" id="PR00983">
    <property type="entry name" value="TRNASYNTHCYS"/>
</dbReference>
<dbReference type="SMART" id="SM00840">
    <property type="entry name" value="DALR_2"/>
    <property type="match status" value="1"/>
</dbReference>
<dbReference type="SUPFAM" id="SSF47323">
    <property type="entry name" value="Anticodon-binding domain of a subclass of class I aminoacyl-tRNA synthetases"/>
    <property type="match status" value="1"/>
</dbReference>
<dbReference type="SUPFAM" id="SSF52374">
    <property type="entry name" value="Nucleotidylyl transferase"/>
    <property type="match status" value="1"/>
</dbReference>
<evidence type="ECO:0000255" key="1">
    <source>
        <dbReference type="HAMAP-Rule" id="MF_00041"/>
    </source>
</evidence>
<feature type="chain" id="PRO_0000332830" description="Cysteine--tRNA ligase">
    <location>
        <begin position="1"/>
        <end position="464"/>
    </location>
</feature>
<feature type="short sequence motif" description="'HIGH' region">
    <location>
        <begin position="34"/>
        <end position="44"/>
    </location>
</feature>
<feature type="short sequence motif" description="'KMSKS' region">
    <location>
        <begin position="270"/>
        <end position="274"/>
    </location>
</feature>
<feature type="binding site" evidence="1">
    <location>
        <position position="32"/>
    </location>
    <ligand>
        <name>Zn(2+)</name>
        <dbReference type="ChEBI" id="CHEBI:29105"/>
    </ligand>
</feature>
<feature type="binding site" evidence="1">
    <location>
        <position position="213"/>
    </location>
    <ligand>
        <name>Zn(2+)</name>
        <dbReference type="ChEBI" id="CHEBI:29105"/>
    </ligand>
</feature>
<feature type="binding site" evidence="1">
    <location>
        <position position="238"/>
    </location>
    <ligand>
        <name>Zn(2+)</name>
        <dbReference type="ChEBI" id="CHEBI:29105"/>
    </ligand>
</feature>
<feature type="binding site" evidence="1">
    <location>
        <position position="242"/>
    </location>
    <ligand>
        <name>Zn(2+)</name>
        <dbReference type="ChEBI" id="CHEBI:29105"/>
    </ligand>
</feature>
<feature type="binding site" evidence="1">
    <location>
        <position position="273"/>
    </location>
    <ligand>
        <name>ATP</name>
        <dbReference type="ChEBI" id="CHEBI:30616"/>
    </ligand>
</feature>
<organism>
    <name type="scientific">Francisella tularensis subsp. tularensis (strain WY96-3418)</name>
    <dbReference type="NCBI Taxonomy" id="418136"/>
    <lineage>
        <taxon>Bacteria</taxon>
        <taxon>Pseudomonadati</taxon>
        <taxon>Pseudomonadota</taxon>
        <taxon>Gammaproteobacteria</taxon>
        <taxon>Thiotrichales</taxon>
        <taxon>Francisellaceae</taxon>
        <taxon>Francisella</taxon>
    </lineage>
</organism>
<comment type="catalytic activity">
    <reaction evidence="1">
        <text>tRNA(Cys) + L-cysteine + ATP = L-cysteinyl-tRNA(Cys) + AMP + diphosphate</text>
        <dbReference type="Rhea" id="RHEA:17773"/>
        <dbReference type="Rhea" id="RHEA-COMP:9661"/>
        <dbReference type="Rhea" id="RHEA-COMP:9679"/>
        <dbReference type="ChEBI" id="CHEBI:30616"/>
        <dbReference type="ChEBI" id="CHEBI:33019"/>
        <dbReference type="ChEBI" id="CHEBI:35235"/>
        <dbReference type="ChEBI" id="CHEBI:78442"/>
        <dbReference type="ChEBI" id="CHEBI:78517"/>
        <dbReference type="ChEBI" id="CHEBI:456215"/>
        <dbReference type="EC" id="6.1.1.16"/>
    </reaction>
</comment>
<comment type="cofactor">
    <cofactor evidence="1">
        <name>Zn(2+)</name>
        <dbReference type="ChEBI" id="CHEBI:29105"/>
    </cofactor>
    <text evidence="1">Binds 1 zinc ion per subunit.</text>
</comment>
<comment type="subunit">
    <text evidence="1">Monomer.</text>
</comment>
<comment type="subcellular location">
    <subcellularLocation>
        <location evidence="1">Cytoplasm</location>
    </subcellularLocation>
</comment>
<comment type="similarity">
    <text evidence="1">Belongs to the class-I aminoacyl-tRNA synthetase family.</text>
</comment>
<sequence length="464" mass="53076">MDFCFMIFYNSLSGQKEQFKPIEANKIKMYACGVTVYDDCHIGHARTYIAFDVINRYFKYRGYDVTLVRNITDIDDKIIKRANENGESTTELVERNIKAMHDVFARLNILKPSKEPRATETIPEMVAMIETLIKKGYAYQGANGDVFYRVTKFADYGKLSKQNLEALQQGSRVDVVEEKENPMDFVLWKMAKEGEPAWDSPWGAGRPGWHIECSAMSKKLLGDTFDIHAGGSDLRFPHHENEIAQSEACNECTFANYWLHSGMVKVNAEKMSKSLNNFFTIVEVLEEYHPEVVRYFLASTVYRSEINYSKENLENAKASVERLFNALRDIEPIEVNLPDDASEYEEKFIKAMDNDFNTPEALAVLFSLAKEINTLKTTNKYKASGYAYLLRKLCDVLGILFTDIEEYFKQGDGADASEIEKLIAERTQAKKDKNYARADEIRNQLQQQGIILEDSATGTTWKKG</sequence>
<reference key="1">
    <citation type="journal article" date="2007" name="PLoS ONE">
        <title>Complete genomic characterization of a pathogenic A.II strain of Francisella tularensis subspecies tularensis.</title>
        <authorList>
            <person name="Beckstrom-Sternberg S.M."/>
            <person name="Auerbach R.K."/>
            <person name="Godbole S."/>
            <person name="Pearson J.V."/>
            <person name="Beckstrom-Sternberg J.S."/>
            <person name="Deng Z."/>
            <person name="Munk C."/>
            <person name="Kubota K."/>
            <person name="Zhou Y."/>
            <person name="Bruce D."/>
            <person name="Noronha J."/>
            <person name="Scheuermann R.H."/>
            <person name="Wang A."/>
            <person name="Wei X."/>
            <person name="Wang J."/>
            <person name="Hao J."/>
            <person name="Wagner D.M."/>
            <person name="Brettin T.S."/>
            <person name="Brown N."/>
            <person name="Gilna P."/>
            <person name="Keim P.S."/>
        </authorList>
    </citation>
    <scope>NUCLEOTIDE SEQUENCE [LARGE SCALE GENOMIC DNA]</scope>
    <source>
        <strain>WY96-3418</strain>
    </source>
</reference>
<keyword id="KW-0030">Aminoacyl-tRNA synthetase</keyword>
<keyword id="KW-0067">ATP-binding</keyword>
<keyword id="KW-0963">Cytoplasm</keyword>
<keyword id="KW-0436">Ligase</keyword>
<keyword id="KW-0479">Metal-binding</keyword>
<keyword id="KW-0547">Nucleotide-binding</keyword>
<keyword id="KW-0648">Protein biosynthesis</keyword>
<keyword id="KW-0862">Zinc</keyword>
<protein>
    <recommendedName>
        <fullName evidence="1">Cysteine--tRNA ligase</fullName>
        <ecNumber evidence="1">6.1.1.16</ecNumber>
    </recommendedName>
    <alternativeName>
        <fullName evidence="1">Cysteinyl-tRNA synthetase</fullName>
        <shortName evidence="1">CysRS</shortName>
    </alternativeName>
</protein>
<gene>
    <name evidence="1" type="primary">cysS</name>
    <name type="ordered locus">FTW_0301</name>
</gene>